<sequence>MEVDIRRVALKHALANAVKFGGKARVDSVVSKVFAEVPEARKAAKEVVELVKEVVEEVNSMSPESQASLLSELWPEALSGERKVEVKRLPPLPGAEEVGGKVVTRFAPNPDFVLHLGSARPAILNYYYAKKMYNGKFILRFEDTDPRTKRPMPEAYDLIREDLRWLGTPWDEEYIQSQRMEVYYEVAEALIKSGNAYVCTHSQDEIKAFRDAGKPDPCSFLPPEEHMERWEKMLSGEYPEGAAVLRIKTDPAHPNPSVRDWIAFRVLDTEKTPHPLTGDKYRVWPTYNFACAVDDHMLGVTHVLRGEEHAVNTLKQEYVYRHMGWKPPVSIHFGRMNLEGMVLSKSVIRRGIEKGLFSSIDDIRLGTLRALRRRGILPEAIWDLVLEVGIKPSTARVSVDKLHAFNRKYLEPRANRYMFVPEPAKVASIEGLEAPITAEVIVHPSFPERGRRRITFSKPEVYLPSDVASSMVRLMGLGNFEVVDGGSKLRYLNNDVSFAKKHELPIVQWAPVESSVRGRVLKAAGTKIEEISGYGEPSLAELPPGEQVQFVRLGFVRVEGPETYIFTHD</sequence>
<protein>
    <recommendedName>
        <fullName evidence="1">Glutamate--tRNA ligase</fullName>
        <ecNumber evidence="1">6.1.1.17</ecNumber>
    </recommendedName>
    <alternativeName>
        <fullName evidence="1">Glutamyl-tRNA synthetase</fullName>
        <shortName evidence="1">GluRS</shortName>
    </alternativeName>
</protein>
<gene>
    <name evidence="1" type="primary">gltX</name>
    <name type="ordered locus">Tpen_0816</name>
</gene>
<evidence type="ECO:0000255" key="1">
    <source>
        <dbReference type="HAMAP-Rule" id="MF_02076"/>
    </source>
</evidence>
<dbReference type="EC" id="6.1.1.17" evidence="1"/>
<dbReference type="EMBL" id="CP000505">
    <property type="protein sequence ID" value="ABL78217.1"/>
    <property type="molecule type" value="Genomic_DNA"/>
</dbReference>
<dbReference type="RefSeq" id="WP_011752482.1">
    <property type="nucleotide sequence ID" value="NC_008698.1"/>
</dbReference>
<dbReference type="SMR" id="A1RYD7"/>
<dbReference type="STRING" id="368408.Tpen_0816"/>
<dbReference type="EnsemblBacteria" id="ABL78217">
    <property type="protein sequence ID" value="ABL78217"/>
    <property type="gene ID" value="Tpen_0816"/>
</dbReference>
<dbReference type="GeneID" id="4601986"/>
<dbReference type="KEGG" id="tpe:Tpen_0816"/>
<dbReference type="eggNOG" id="arCOG04302">
    <property type="taxonomic scope" value="Archaea"/>
</dbReference>
<dbReference type="HOGENOM" id="CLU_001882_1_3_2"/>
<dbReference type="OrthoDB" id="10470at2157"/>
<dbReference type="Proteomes" id="UP000000641">
    <property type="component" value="Chromosome"/>
</dbReference>
<dbReference type="GO" id="GO:0005829">
    <property type="term" value="C:cytosol"/>
    <property type="evidence" value="ECO:0007669"/>
    <property type="project" value="TreeGrafter"/>
</dbReference>
<dbReference type="GO" id="GO:0005524">
    <property type="term" value="F:ATP binding"/>
    <property type="evidence" value="ECO:0007669"/>
    <property type="project" value="UniProtKB-UniRule"/>
</dbReference>
<dbReference type="GO" id="GO:0004818">
    <property type="term" value="F:glutamate-tRNA ligase activity"/>
    <property type="evidence" value="ECO:0007669"/>
    <property type="project" value="UniProtKB-UniRule"/>
</dbReference>
<dbReference type="GO" id="GO:0043604">
    <property type="term" value="P:amide biosynthetic process"/>
    <property type="evidence" value="ECO:0007669"/>
    <property type="project" value="TreeGrafter"/>
</dbReference>
<dbReference type="GO" id="GO:0006424">
    <property type="term" value="P:glutamyl-tRNA aminoacylation"/>
    <property type="evidence" value="ECO:0007669"/>
    <property type="project" value="UniProtKB-UniRule"/>
</dbReference>
<dbReference type="CDD" id="cd09287">
    <property type="entry name" value="GluRS_non_core"/>
    <property type="match status" value="1"/>
</dbReference>
<dbReference type="Gene3D" id="2.40.240.100">
    <property type="match status" value="1"/>
</dbReference>
<dbReference type="Gene3D" id="3.40.50.620">
    <property type="entry name" value="HUPs"/>
    <property type="match status" value="1"/>
</dbReference>
<dbReference type="Gene3D" id="2.40.240.10">
    <property type="entry name" value="Ribosomal Protein L25, Chain P"/>
    <property type="match status" value="1"/>
</dbReference>
<dbReference type="HAMAP" id="MF_02076">
    <property type="entry name" value="Glu_tRNA_synth_type2"/>
    <property type="match status" value="1"/>
</dbReference>
<dbReference type="InterPro" id="IPR050132">
    <property type="entry name" value="Gln/Glu-tRNA_Ligase"/>
</dbReference>
<dbReference type="InterPro" id="IPR004526">
    <property type="entry name" value="Glu-tRNA-synth_arc/euk"/>
</dbReference>
<dbReference type="InterPro" id="IPR000924">
    <property type="entry name" value="Glu/Gln-tRNA-synth"/>
</dbReference>
<dbReference type="InterPro" id="IPR020058">
    <property type="entry name" value="Glu/Gln-tRNA-synth_Ib_cat-dom"/>
</dbReference>
<dbReference type="InterPro" id="IPR020059">
    <property type="entry name" value="Glu/Gln-tRNA-synth_Ib_codon-bd"/>
</dbReference>
<dbReference type="InterPro" id="IPR020056">
    <property type="entry name" value="Rbsml_bL25/Gln-tRNA_synth_N"/>
</dbReference>
<dbReference type="InterPro" id="IPR011035">
    <property type="entry name" value="Ribosomal_bL25/Gln-tRNA_synth"/>
</dbReference>
<dbReference type="InterPro" id="IPR014729">
    <property type="entry name" value="Rossmann-like_a/b/a_fold"/>
</dbReference>
<dbReference type="InterPro" id="IPR049437">
    <property type="entry name" value="tRNA-synt_1c_C2"/>
</dbReference>
<dbReference type="NCBIfam" id="TIGR00463">
    <property type="entry name" value="gltX_arch"/>
    <property type="match status" value="1"/>
</dbReference>
<dbReference type="NCBIfam" id="NF003169">
    <property type="entry name" value="PRK04156.1"/>
    <property type="match status" value="1"/>
</dbReference>
<dbReference type="PANTHER" id="PTHR43097:SF5">
    <property type="entry name" value="GLUTAMATE--TRNA LIGASE"/>
    <property type="match status" value="1"/>
</dbReference>
<dbReference type="PANTHER" id="PTHR43097">
    <property type="entry name" value="GLUTAMINE-TRNA LIGASE"/>
    <property type="match status" value="1"/>
</dbReference>
<dbReference type="Pfam" id="PF00749">
    <property type="entry name" value="tRNA-synt_1c"/>
    <property type="match status" value="1"/>
</dbReference>
<dbReference type="Pfam" id="PF03950">
    <property type="entry name" value="tRNA-synt_1c_C"/>
    <property type="match status" value="1"/>
</dbReference>
<dbReference type="Pfam" id="PF20974">
    <property type="entry name" value="tRNA-synt_1c_C2"/>
    <property type="match status" value="1"/>
</dbReference>
<dbReference type="PRINTS" id="PR00987">
    <property type="entry name" value="TRNASYNTHGLU"/>
</dbReference>
<dbReference type="SUPFAM" id="SSF52374">
    <property type="entry name" value="Nucleotidylyl transferase"/>
    <property type="match status" value="1"/>
</dbReference>
<dbReference type="SUPFAM" id="SSF50715">
    <property type="entry name" value="Ribosomal protein L25-like"/>
    <property type="match status" value="1"/>
</dbReference>
<accession>A1RYD7</accession>
<feature type="chain" id="PRO_1000001982" description="Glutamate--tRNA ligase">
    <location>
        <begin position="1"/>
        <end position="569"/>
    </location>
</feature>
<feature type="short sequence motif" description="'HIGH' region" evidence="1">
    <location>
        <begin position="108"/>
        <end position="118"/>
    </location>
</feature>
<keyword id="KW-0030">Aminoacyl-tRNA synthetase</keyword>
<keyword id="KW-0067">ATP-binding</keyword>
<keyword id="KW-0963">Cytoplasm</keyword>
<keyword id="KW-0436">Ligase</keyword>
<keyword id="KW-0547">Nucleotide-binding</keyword>
<keyword id="KW-0648">Protein biosynthesis</keyword>
<keyword id="KW-1185">Reference proteome</keyword>
<organism>
    <name type="scientific">Thermofilum pendens (strain DSM 2475 / Hrk 5)</name>
    <dbReference type="NCBI Taxonomy" id="368408"/>
    <lineage>
        <taxon>Archaea</taxon>
        <taxon>Thermoproteota</taxon>
        <taxon>Thermoprotei</taxon>
        <taxon>Thermofilales</taxon>
        <taxon>Thermofilaceae</taxon>
        <taxon>Thermofilum</taxon>
    </lineage>
</organism>
<comment type="function">
    <text evidence="1">Catalyzes the attachment of glutamate to tRNA(Glu) in a two-step reaction: glutamate is first activated by ATP to form Glu-AMP and then transferred to the acceptor end of tRNA(Glu).</text>
</comment>
<comment type="catalytic activity">
    <reaction evidence="1">
        <text>tRNA(Glu) + L-glutamate + ATP = L-glutamyl-tRNA(Glu) + AMP + diphosphate</text>
        <dbReference type="Rhea" id="RHEA:23540"/>
        <dbReference type="Rhea" id="RHEA-COMP:9663"/>
        <dbReference type="Rhea" id="RHEA-COMP:9680"/>
        <dbReference type="ChEBI" id="CHEBI:29985"/>
        <dbReference type="ChEBI" id="CHEBI:30616"/>
        <dbReference type="ChEBI" id="CHEBI:33019"/>
        <dbReference type="ChEBI" id="CHEBI:78442"/>
        <dbReference type="ChEBI" id="CHEBI:78520"/>
        <dbReference type="ChEBI" id="CHEBI:456215"/>
        <dbReference type="EC" id="6.1.1.17"/>
    </reaction>
</comment>
<comment type="subcellular location">
    <subcellularLocation>
        <location evidence="1">Cytoplasm</location>
    </subcellularLocation>
</comment>
<comment type="similarity">
    <text evidence="1">Belongs to the class-I aminoacyl-tRNA synthetase family. Glutamate--tRNA ligase type 2 subfamily.</text>
</comment>
<proteinExistence type="inferred from homology"/>
<name>SYE_THEPD</name>
<reference key="1">
    <citation type="journal article" date="2008" name="J. Bacteriol.">
        <title>Genome sequence of Thermofilum pendens reveals an exceptional loss of biosynthetic pathways without genome reduction.</title>
        <authorList>
            <person name="Anderson I."/>
            <person name="Rodriguez J."/>
            <person name="Susanti D."/>
            <person name="Porat I."/>
            <person name="Reich C."/>
            <person name="Ulrich L.E."/>
            <person name="Elkins J.G."/>
            <person name="Mavromatis K."/>
            <person name="Lykidis A."/>
            <person name="Kim E."/>
            <person name="Thompson L.S."/>
            <person name="Nolan M."/>
            <person name="Land M."/>
            <person name="Copeland A."/>
            <person name="Lapidus A."/>
            <person name="Lucas S."/>
            <person name="Detter C."/>
            <person name="Zhulin I.B."/>
            <person name="Olsen G.J."/>
            <person name="Whitman W."/>
            <person name="Mukhopadhyay B."/>
            <person name="Bristow J."/>
            <person name="Kyrpides N."/>
        </authorList>
    </citation>
    <scope>NUCLEOTIDE SEQUENCE [LARGE SCALE GENOMIC DNA]</scope>
    <source>
        <strain>DSM 2475 / Hrk 5</strain>
    </source>
</reference>